<accession>Q5AK42</accession>
<accession>A0A1D8PP46</accession>
<gene>
    <name type="ordered locus">CAALFM_C504910WA</name>
    <name type="ORF">CaO19.11461</name>
    <name type="ORF">CaO19.3978</name>
</gene>
<keyword id="KW-0175">Coiled coil</keyword>
<keyword id="KW-0539">Nucleus</keyword>
<keyword id="KW-1185">Reference proteome</keyword>
<keyword id="KW-0698">rRNA processing</keyword>
<organism>
    <name type="scientific">Candida albicans (strain SC5314 / ATCC MYA-2876)</name>
    <name type="common">Yeast</name>
    <dbReference type="NCBI Taxonomy" id="237561"/>
    <lineage>
        <taxon>Eukaryota</taxon>
        <taxon>Fungi</taxon>
        <taxon>Dikarya</taxon>
        <taxon>Ascomycota</taxon>
        <taxon>Saccharomycotina</taxon>
        <taxon>Pichiomycetes</taxon>
        <taxon>Debaryomycetaceae</taxon>
        <taxon>Candida/Lodderomyces clade</taxon>
        <taxon>Candida</taxon>
    </lineage>
</organism>
<protein>
    <recommendedName>
        <fullName>rRNA-processing protein EFG1</fullName>
    </recommendedName>
</protein>
<comment type="function">
    <text evidence="1">Involved in rRNA processing.</text>
</comment>
<comment type="subcellular location">
    <subcellularLocation>
        <location evidence="1">Nucleus</location>
        <location evidence="1">Nucleolus</location>
    </subcellularLocation>
</comment>
<comment type="similarity">
    <text evidence="4">Belongs to the EFG1 family.</text>
</comment>
<feature type="chain" id="PRO_0000330265" description="rRNA-processing protein EFG1">
    <location>
        <begin position="1"/>
        <end position="237"/>
    </location>
</feature>
<feature type="region of interest" description="Disordered" evidence="3">
    <location>
        <begin position="1"/>
        <end position="24"/>
    </location>
</feature>
<feature type="region of interest" description="Disordered" evidence="3">
    <location>
        <begin position="206"/>
        <end position="237"/>
    </location>
</feature>
<feature type="coiled-coil region" evidence="2">
    <location>
        <begin position="53"/>
        <end position="113"/>
    </location>
</feature>
<feature type="coiled-coil region" evidence="2">
    <location>
        <begin position="166"/>
        <end position="186"/>
    </location>
</feature>
<feature type="compositionally biased region" description="Acidic residues" evidence="3">
    <location>
        <begin position="228"/>
        <end position="237"/>
    </location>
</feature>
<name>EFG1P_CANAL</name>
<sequence length="237" mass="27761">MPKTVKNPKNNKSRSRGAPIQVAESIGSGSAKIKKKIRDIERLIKKNPNLPADKKIEYDRALKGLKVELQNSQVQNKAKVLAKKYHMVRFFERKKAVRKLKNLRKEFERISQTGIRKDIKKARKQLRHGEIDLAYVILFPKTEKYISLYPSPNDEDQTDPNVIKGLKITEERRREFRKYIEKLMEEGKLPFSIDDALQGKNIRLDNDKTQKAVLTEEIDAPEQKQDEQQEEQDDFFE</sequence>
<proteinExistence type="inferred from homology"/>
<evidence type="ECO:0000250" key="1"/>
<evidence type="ECO:0000255" key="2"/>
<evidence type="ECO:0000256" key="3">
    <source>
        <dbReference type="SAM" id="MobiDB-lite"/>
    </source>
</evidence>
<evidence type="ECO:0000305" key="4"/>
<dbReference type="EMBL" id="CP017627">
    <property type="protein sequence ID" value="AOW29895.1"/>
    <property type="molecule type" value="Genomic_DNA"/>
</dbReference>
<dbReference type="RefSeq" id="XP_721887.1">
    <property type="nucleotide sequence ID" value="XM_716794.1"/>
</dbReference>
<dbReference type="SMR" id="Q5AK42"/>
<dbReference type="FunCoup" id="Q5AK42">
    <property type="interactions" value="193"/>
</dbReference>
<dbReference type="STRING" id="237561.Q5AK42"/>
<dbReference type="EnsemblFungi" id="C5_04910W_A-T">
    <property type="protein sequence ID" value="C5_04910W_A-T-p1"/>
    <property type="gene ID" value="C5_04910W_A"/>
</dbReference>
<dbReference type="GeneID" id="3636417"/>
<dbReference type="KEGG" id="cal:CAALFM_C504910WA"/>
<dbReference type="CGD" id="CAL0000198404">
    <property type="gene designation" value="orf19.11461"/>
</dbReference>
<dbReference type="VEuPathDB" id="FungiDB:C5_04910W_A"/>
<dbReference type="eggNOG" id="KOG4484">
    <property type="taxonomic scope" value="Eukaryota"/>
</dbReference>
<dbReference type="HOGENOM" id="CLU_066912_2_0_1"/>
<dbReference type="InParanoid" id="Q5AK42"/>
<dbReference type="OMA" id="KPHRIQE"/>
<dbReference type="OrthoDB" id="47732at2759"/>
<dbReference type="PRO" id="PR:Q5AK42"/>
<dbReference type="Proteomes" id="UP000000559">
    <property type="component" value="Chromosome 5"/>
</dbReference>
<dbReference type="GO" id="GO:0005730">
    <property type="term" value="C:nucleolus"/>
    <property type="evidence" value="ECO:0007669"/>
    <property type="project" value="UniProtKB-SubCell"/>
</dbReference>
<dbReference type="GO" id="GO:0000462">
    <property type="term" value="P:maturation of SSU-rRNA from tricistronic rRNA transcript (SSU-rRNA, 5.8S rRNA, LSU-rRNA)"/>
    <property type="evidence" value="ECO:0000318"/>
    <property type="project" value="GO_Central"/>
</dbReference>
<dbReference type="InterPro" id="IPR019310">
    <property type="entry name" value="Efg1"/>
</dbReference>
<dbReference type="InterPro" id="IPR050786">
    <property type="entry name" value="EFG1_rRNA-proc"/>
</dbReference>
<dbReference type="PANTHER" id="PTHR33911">
    <property type="entry name" value="RRNA-PROCESSING PROTEIN EFG1"/>
    <property type="match status" value="1"/>
</dbReference>
<dbReference type="PANTHER" id="PTHR33911:SF1">
    <property type="entry name" value="RRNA-PROCESSING PROTEIN EFG1"/>
    <property type="match status" value="1"/>
</dbReference>
<dbReference type="Pfam" id="PF10153">
    <property type="entry name" value="Efg1"/>
    <property type="match status" value="1"/>
</dbReference>
<reference key="1">
    <citation type="journal article" date="2004" name="Proc. Natl. Acad. Sci. U.S.A.">
        <title>The diploid genome sequence of Candida albicans.</title>
        <authorList>
            <person name="Jones T."/>
            <person name="Federspiel N.A."/>
            <person name="Chibana H."/>
            <person name="Dungan J."/>
            <person name="Kalman S."/>
            <person name="Magee B.B."/>
            <person name="Newport G."/>
            <person name="Thorstenson Y.R."/>
            <person name="Agabian N."/>
            <person name="Magee P.T."/>
            <person name="Davis R.W."/>
            <person name="Scherer S."/>
        </authorList>
    </citation>
    <scope>NUCLEOTIDE SEQUENCE [LARGE SCALE GENOMIC DNA]</scope>
    <source>
        <strain>SC5314 / ATCC MYA-2876</strain>
    </source>
</reference>
<reference key="2">
    <citation type="journal article" date="2007" name="Genome Biol.">
        <title>Assembly of the Candida albicans genome into sixteen supercontigs aligned on the eight chromosomes.</title>
        <authorList>
            <person name="van het Hoog M."/>
            <person name="Rast T.J."/>
            <person name="Martchenko M."/>
            <person name="Grindle S."/>
            <person name="Dignard D."/>
            <person name="Hogues H."/>
            <person name="Cuomo C."/>
            <person name="Berriman M."/>
            <person name="Scherer S."/>
            <person name="Magee B.B."/>
            <person name="Whiteway M."/>
            <person name="Chibana H."/>
            <person name="Nantel A."/>
            <person name="Magee P.T."/>
        </authorList>
    </citation>
    <scope>GENOME REANNOTATION</scope>
    <source>
        <strain>SC5314 / ATCC MYA-2876</strain>
    </source>
</reference>
<reference key="3">
    <citation type="journal article" date="2013" name="Genome Biol.">
        <title>Assembly of a phased diploid Candida albicans genome facilitates allele-specific measurements and provides a simple model for repeat and indel structure.</title>
        <authorList>
            <person name="Muzzey D."/>
            <person name="Schwartz K."/>
            <person name="Weissman J.S."/>
            <person name="Sherlock G."/>
        </authorList>
    </citation>
    <scope>NUCLEOTIDE SEQUENCE [LARGE SCALE GENOMIC DNA]</scope>
    <scope>GENOME REANNOTATION</scope>
    <source>
        <strain>SC5314 / ATCC MYA-2876</strain>
    </source>
</reference>